<name>TNR27_MOUSE</name>
<reference key="1">
    <citation type="journal article" date="2005" name="Science">
        <title>The transcriptional landscape of the mammalian genome.</title>
        <authorList>
            <person name="Carninci P."/>
            <person name="Kasukawa T."/>
            <person name="Katayama S."/>
            <person name="Gough J."/>
            <person name="Frith M.C."/>
            <person name="Maeda N."/>
            <person name="Oyama R."/>
            <person name="Ravasi T."/>
            <person name="Lenhard B."/>
            <person name="Wells C."/>
            <person name="Kodzius R."/>
            <person name="Shimokawa K."/>
            <person name="Bajic V.B."/>
            <person name="Brenner S.E."/>
            <person name="Batalov S."/>
            <person name="Forrest A.R."/>
            <person name="Zavolan M."/>
            <person name="Davis M.J."/>
            <person name="Wilming L.G."/>
            <person name="Aidinis V."/>
            <person name="Allen J.E."/>
            <person name="Ambesi-Impiombato A."/>
            <person name="Apweiler R."/>
            <person name="Aturaliya R.N."/>
            <person name="Bailey T.L."/>
            <person name="Bansal M."/>
            <person name="Baxter L."/>
            <person name="Beisel K.W."/>
            <person name="Bersano T."/>
            <person name="Bono H."/>
            <person name="Chalk A.M."/>
            <person name="Chiu K.P."/>
            <person name="Choudhary V."/>
            <person name="Christoffels A."/>
            <person name="Clutterbuck D.R."/>
            <person name="Crowe M.L."/>
            <person name="Dalla E."/>
            <person name="Dalrymple B.P."/>
            <person name="de Bono B."/>
            <person name="Della Gatta G."/>
            <person name="di Bernardo D."/>
            <person name="Down T."/>
            <person name="Engstrom P."/>
            <person name="Fagiolini M."/>
            <person name="Faulkner G."/>
            <person name="Fletcher C.F."/>
            <person name="Fukushima T."/>
            <person name="Furuno M."/>
            <person name="Futaki S."/>
            <person name="Gariboldi M."/>
            <person name="Georgii-Hemming P."/>
            <person name="Gingeras T.R."/>
            <person name="Gojobori T."/>
            <person name="Green R.E."/>
            <person name="Gustincich S."/>
            <person name="Harbers M."/>
            <person name="Hayashi Y."/>
            <person name="Hensch T.K."/>
            <person name="Hirokawa N."/>
            <person name="Hill D."/>
            <person name="Huminiecki L."/>
            <person name="Iacono M."/>
            <person name="Ikeo K."/>
            <person name="Iwama A."/>
            <person name="Ishikawa T."/>
            <person name="Jakt M."/>
            <person name="Kanapin A."/>
            <person name="Katoh M."/>
            <person name="Kawasawa Y."/>
            <person name="Kelso J."/>
            <person name="Kitamura H."/>
            <person name="Kitano H."/>
            <person name="Kollias G."/>
            <person name="Krishnan S.P."/>
            <person name="Kruger A."/>
            <person name="Kummerfeld S.K."/>
            <person name="Kurochkin I.V."/>
            <person name="Lareau L.F."/>
            <person name="Lazarevic D."/>
            <person name="Lipovich L."/>
            <person name="Liu J."/>
            <person name="Liuni S."/>
            <person name="McWilliam S."/>
            <person name="Madan Babu M."/>
            <person name="Madera M."/>
            <person name="Marchionni L."/>
            <person name="Matsuda H."/>
            <person name="Matsuzawa S."/>
            <person name="Miki H."/>
            <person name="Mignone F."/>
            <person name="Miyake S."/>
            <person name="Morris K."/>
            <person name="Mottagui-Tabar S."/>
            <person name="Mulder N."/>
            <person name="Nakano N."/>
            <person name="Nakauchi H."/>
            <person name="Ng P."/>
            <person name="Nilsson R."/>
            <person name="Nishiguchi S."/>
            <person name="Nishikawa S."/>
            <person name="Nori F."/>
            <person name="Ohara O."/>
            <person name="Okazaki Y."/>
            <person name="Orlando V."/>
            <person name="Pang K.C."/>
            <person name="Pavan W.J."/>
            <person name="Pavesi G."/>
            <person name="Pesole G."/>
            <person name="Petrovsky N."/>
            <person name="Piazza S."/>
            <person name="Reed J."/>
            <person name="Reid J.F."/>
            <person name="Ring B.Z."/>
            <person name="Ringwald M."/>
            <person name="Rost B."/>
            <person name="Ruan Y."/>
            <person name="Salzberg S.L."/>
            <person name="Sandelin A."/>
            <person name="Schneider C."/>
            <person name="Schoenbach C."/>
            <person name="Sekiguchi K."/>
            <person name="Semple C.A."/>
            <person name="Seno S."/>
            <person name="Sessa L."/>
            <person name="Sheng Y."/>
            <person name="Shibata Y."/>
            <person name="Shimada H."/>
            <person name="Shimada K."/>
            <person name="Silva D."/>
            <person name="Sinclair B."/>
            <person name="Sperling S."/>
            <person name="Stupka E."/>
            <person name="Sugiura K."/>
            <person name="Sultana R."/>
            <person name="Takenaka Y."/>
            <person name="Taki K."/>
            <person name="Tammoja K."/>
            <person name="Tan S.L."/>
            <person name="Tang S."/>
            <person name="Taylor M.S."/>
            <person name="Tegner J."/>
            <person name="Teichmann S.A."/>
            <person name="Ueda H.R."/>
            <person name="van Nimwegen E."/>
            <person name="Verardo R."/>
            <person name="Wei C.L."/>
            <person name="Yagi K."/>
            <person name="Yamanishi H."/>
            <person name="Zabarovsky E."/>
            <person name="Zhu S."/>
            <person name="Zimmer A."/>
            <person name="Hide W."/>
            <person name="Bult C."/>
            <person name="Grimmond S.M."/>
            <person name="Teasdale R.D."/>
            <person name="Liu E.T."/>
            <person name="Brusic V."/>
            <person name="Quackenbush J."/>
            <person name="Wahlestedt C."/>
            <person name="Mattick J.S."/>
            <person name="Hume D.A."/>
            <person name="Kai C."/>
            <person name="Sasaki D."/>
            <person name="Tomaru Y."/>
            <person name="Fukuda S."/>
            <person name="Kanamori-Katayama M."/>
            <person name="Suzuki M."/>
            <person name="Aoki J."/>
            <person name="Arakawa T."/>
            <person name="Iida J."/>
            <person name="Imamura K."/>
            <person name="Itoh M."/>
            <person name="Kato T."/>
            <person name="Kawaji H."/>
            <person name="Kawagashira N."/>
            <person name="Kawashima T."/>
            <person name="Kojima M."/>
            <person name="Kondo S."/>
            <person name="Konno H."/>
            <person name="Nakano K."/>
            <person name="Ninomiya N."/>
            <person name="Nishio T."/>
            <person name="Okada M."/>
            <person name="Plessy C."/>
            <person name="Shibata K."/>
            <person name="Shiraki T."/>
            <person name="Suzuki S."/>
            <person name="Tagami M."/>
            <person name="Waki K."/>
            <person name="Watahiki A."/>
            <person name="Okamura-Oho Y."/>
            <person name="Suzuki H."/>
            <person name="Kawai J."/>
            <person name="Hayashizaki Y."/>
        </authorList>
    </citation>
    <scope>NUCLEOTIDE SEQUENCE [LARGE SCALE MRNA]</scope>
    <source>
        <strain>C57BL/6J</strain>
    </source>
</reference>
<protein>
    <recommendedName>
        <fullName>Tumor necrosis factor receptor superfamily member 27</fullName>
    </recommendedName>
    <alternativeName>
        <fullName>X-linked ectodysplasin-A2 receptor</fullName>
        <shortName>EDA-A2 receptor</shortName>
    </alternativeName>
</protein>
<keyword id="KW-0217">Developmental protein</keyword>
<keyword id="KW-0221">Differentiation</keyword>
<keyword id="KW-1015">Disulfide bond</keyword>
<keyword id="KW-0325">Glycoprotein</keyword>
<keyword id="KW-0472">Membrane</keyword>
<keyword id="KW-0675">Receptor</keyword>
<keyword id="KW-1185">Reference proteome</keyword>
<keyword id="KW-0677">Repeat</keyword>
<keyword id="KW-0812">Transmembrane</keyword>
<keyword id="KW-1133">Transmembrane helix</keyword>
<organism>
    <name type="scientific">Mus musculus</name>
    <name type="common">Mouse</name>
    <dbReference type="NCBI Taxonomy" id="10090"/>
    <lineage>
        <taxon>Eukaryota</taxon>
        <taxon>Metazoa</taxon>
        <taxon>Chordata</taxon>
        <taxon>Craniata</taxon>
        <taxon>Vertebrata</taxon>
        <taxon>Euteleostomi</taxon>
        <taxon>Mammalia</taxon>
        <taxon>Eutheria</taxon>
        <taxon>Euarchontoglires</taxon>
        <taxon>Glires</taxon>
        <taxon>Rodentia</taxon>
        <taxon>Myomorpha</taxon>
        <taxon>Muroidea</taxon>
        <taxon>Muridae</taxon>
        <taxon>Murinae</taxon>
        <taxon>Mus</taxon>
        <taxon>Mus</taxon>
    </lineage>
</organism>
<proteinExistence type="evidence at transcript level"/>
<dbReference type="EMBL" id="AK034909">
    <property type="protein sequence ID" value="BAC28879.1"/>
    <property type="molecule type" value="mRNA"/>
</dbReference>
<dbReference type="EMBL" id="AK049134">
    <property type="protein sequence ID" value="BAC33562.1"/>
    <property type="molecule type" value="mRNA"/>
</dbReference>
<dbReference type="CCDS" id="CCDS30293.1"/>
<dbReference type="RefSeq" id="NP_001154904.1">
    <property type="nucleotide sequence ID" value="NM_001161432.2"/>
</dbReference>
<dbReference type="RefSeq" id="NP_001154905.1">
    <property type="nucleotide sequence ID" value="NM_001161433.2"/>
</dbReference>
<dbReference type="RefSeq" id="NP_780749.3">
    <property type="nucleotide sequence ID" value="NM_175540.5"/>
</dbReference>
<dbReference type="RefSeq" id="XP_006528088.1">
    <property type="nucleotide sequence ID" value="XM_006528025.2"/>
</dbReference>
<dbReference type="RefSeq" id="XP_006528089.1">
    <property type="nucleotide sequence ID" value="XM_006528026.2"/>
</dbReference>
<dbReference type="BioGRID" id="232789">
    <property type="interactions" value="2"/>
</dbReference>
<dbReference type="FunCoup" id="Q8BX35">
    <property type="interactions" value="967"/>
</dbReference>
<dbReference type="IntAct" id="Q8BX35">
    <property type="interactions" value="1"/>
</dbReference>
<dbReference type="STRING" id="10090.ENSMUSP00000041210"/>
<dbReference type="GlyCosmos" id="Q8BX35">
    <property type="glycosylation" value="2 sites, No reported glycans"/>
</dbReference>
<dbReference type="GlyGen" id="Q8BX35">
    <property type="glycosylation" value="2 sites"/>
</dbReference>
<dbReference type="iPTMnet" id="Q8BX35"/>
<dbReference type="PhosphoSitePlus" id="Q8BX35"/>
<dbReference type="SwissPalm" id="Q8BX35"/>
<dbReference type="PaxDb" id="10090-ENSMUSP00000109463"/>
<dbReference type="ProteomicsDB" id="258810"/>
<dbReference type="Antibodypedia" id="3374">
    <property type="antibodies" value="336 antibodies from 32 providers"/>
</dbReference>
<dbReference type="DNASU" id="245527"/>
<dbReference type="Ensembl" id="ENSMUST00000037353.10">
    <property type="protein sequence ID" value="ENSMUSP00000041210.4"/>
    <property type="gene ID" value="ENSMUSG00000034457.11"/>
</dbReference>
<dbReference type="Ensembl" id="ENSMUST00000113832.2">
    <property type="protein sequence ID" value="ENSMUSP00000109463.2"/>
    <property type="gene ID" value="ENSMUSG00000034457.11"/>
</dbReference>
<dbReference type="GeneID" id="245527"/>
<dbReference type="KEGG" id="mmu:245527"/>
<dbReference type="UCSC" id="uc009tus.2">
    <property type="organism name" value="mouse"/>
</dbReference>
<dbReference type="AGR" id="MGI:2442860"/>
<dbReference type="CTD" id="60401"/>
<dbReference type="MGI" id="MGI:2442860">
    <property type="gene designation" value="Eda2r"/>
</dbReference>
<dbReference type="VEuPathDB" id="HostDB:ENSMUSG00000034457"/>
<dbReference type="eggNOG" id="ENOG502S069">
    <property type="taxonomic scope" value="Eukaryota"/>
</dbReference>
<dbReference type="GeneTree" id="ENSGT00940000153259"/>
<dbReference type="HOGENOM" id="CLU_041149_0_0_1"/>
<dbReference type="InParanoid" id="Q8BX35"/>
<dbReference type="OMA" id="FAIIYCK"/>
<dbReference type="OrthoDB" id="10017617at2759"/>
<dbReference type="PhylomeDB" id="Q8BX35"/>
<dbReference type="TreeFam" id="TF331385"/>
<dbReference type="Reactome" id="R-MMU-5669034">
    <property type="pathway name" value="TNFs bind their physiological receptors"/>
</dbReference>
<dbReference type="BioGRID-ORCS" id="245527">
    <property type="hits" value="3 hits in 78 CRISPR screens"/>
</dbReference>
<dbReference type="ChiTaRS" id="Eda2r">
    <property type="organism name" value="mouse"/>
</dbReference>
<dbReference type="PRO" id="PR:Q8BX35"/>
<dbReference type="Proteomes" id="UP000000589">
    <property type="component" value="Chromosome X"/>
</dbReference>
<dbReference type="RNAct" id="Q8BX35">
    <property type="molecule type" value="protein"/>
</dbReference>
<dbReference type="Bgee" id="ENSMUSG00000034457">
    <property type="expression patterns" value="Expressed in temporalis muscle and 118 other cell types or tissues"/>
</dbReference>
<dbReference type="ExpressionAtlas" id="Q8BX35">
    <property type="expression patterns" value="baseline and differential"/>
</dbReference>
<dbReference type="GO" id="GO:0005886">
    <property type="term" value="C:plasma membrane"/>
    <property type="evidence" value="ECO:0007669"/>
    <property type="project" value="Ensembl"/>
</dbReference>
<dbReference type="GO" id="GO:0004888">
    <property type="term" value="F:transmembrane signaling receptor activity"/>
    <property type="evidence" value="ECO:0000250"/>
    <property type="project" value="UniProtKB"/>
</dbReference>
<dbReference type="GO" id="GO:0005031">
    <property type="term" value="F:tumor necrosis factor receptor activity"/>
    <property type="evidence" value="ECO:0007669"/>
    <property type="project" value="InterPro"/>
</dbReference>
<dbReference type="GO" id="GO:0030154">
    <property type="term" value="P:cell differentiation"/>
    <property type="evidence" value="ECO:0007669"/>
    <property type="project" value="UniProtKB-KW"/>
</dbReference>
<dbReference type="GO" id="GO:0072332">
    <property type="term" value="P:intrinsic apoptotic signaling pathway by p53 class mediator"/>
    <property type="evidence" value="ECO:0000316"/>
    <property type="project" value="MGI"/>
</dbReference>
<dbReference type="GO" id="GO:0043123">
    <property type="term" value="P:positive regulation of canonical NF-kappaB signal transduction"/>
    <property type="evidence" value="ECO:0000250"/>
    <property type="project" value="UniProtKB"/>
</dbReference>
<dbReference type="GO" id="GO:0046330">
    <property type="term" value="P:positive regulation of JNK cascade"/>
    <property type="evidence" value="ECO:0000250"/>
    <property type="project" value="UniProtKB"/>
</dbReference>
<dbReference type="CDD" id="cd15838">
    <property type="entry name" value="TNFRSF27"/>
    <property type="match status" value="1"/>
</dbReference>
<dbReference type="FunFam" id="2.10.50.10:FF:000003">
    <property type="entry name" value="Tumor necrosis factor receptor superfamily member 19"/>
    <property type="match status" value="1"/>
</dbReference>
<dbReference type="Gene3D" id="2.10.50.10">
    <property type="entry name" value="Tumor Necrosis Factor Receptor, subunit A, domain 2"/>
    <property type="match status" value="1"/>
</dbReference>
<dbReference type="InterPro" id="IPR001368">
    <property type="entry name" value="TNFR/NGFR_Cys_rich_reg"/>
</dbReference>
<dbReference type="InterPro" id="IPR022319">
    <property type="entry name" value="TNFR_27"/>
</dbReference>
<dbReference type="InterPro" id="IPR034060">
    <property type="entry name" value="TNFRSF27_N"/>
</dbReference>
<dbReference type="InterPro" id="IPR047526">
    <property type="entry name" value="TNR19/27/EDAR"/>
</dbReference>
<dbReference type="PANTHER" id="PTHR12120">
    <property type="entry name" value="TNFR-CYS DOMAIN-CONTAINING PROTEIN"/>
    <property type="match status" value="1"/>
</dbReference>
<dbReference type="PANTHER" id="PTHR12120:SF8">
    <property type="entry name" value="TUMOR NECROSIS FACTOR RECEPTOR SUPERFAMILY MEMBER 27"/>
    <property type="match status" value="1"/>
</dbReference>
<dbReference type="Pfam" id="PF00020">
    <property type="entry name" value="TNFR_c6"/>
    <property type="match status" value="1"/>
</dbReference>
<dbReference type="PRINTS" id="PR01973">
    <property type="entry name" value="TNFACTORR27"/>
</dbReference>
<dbReference type="SMART" id="SM00208">
    <property type="entry name" value="TNFR"/>
    <property type="match status" value="2"/>
</dbReference>
<dbReference type="SUPFAM" id="SSF57586">
    <property type="entry name" value="TNF receptor-like"/>
    <property type="match status" value="1"/>
</dbReference>
<dbReference type="PROSITE" id="PS00652">
    <property type="entry name" value="TNFR_NGFR_1"/>
    <property type="match status" value="2"/>
</dbReference>
<dbReference type="PROSITE" id="PS50050">
    <property type="entry name" value="TNFR_NGFR_2"/>
    <property type="match status" value="1"/>
</dbReference>
<gene>
    <name type="primary">Eda2r</name>
    <name type="synonym">Tnfrsf27</name>
    <name type="synonym">Xedar</name>
</gene>
<accession>Q8BX35</accession>
<accession>Q8BM50</accession>
<sequence>MDCQENEYRDQWGRCVTCQQCGPGQELSKDCGYGEGGDAHCIVCPPRKYKSTWGHHRCQTCITCAVINRVQKANCTNTSNAICGDCLPRFYRKTRIGGLQDQECIPCTKQTPSSEVQCTFQLSLVKVDAHTVPPREATLVALVGSLLVVFALAFLGLFFLYCKQIFNRHCQCRDSLQYEAEKTVEEDSLFPVPPGQETSPEFPANEGILEIKPLNSILDDDCSSTRGFPTQESFTMASCASESHSQWVHTPIECTELDLQKFSSSIPSTGPETLRENTAEHSGDRLELYVPFEVPSL</sequence>
<feature type="chain" id="PRO_0000058939" description="Tumor necrosis factor receptor superfamily member 27">
    <location>
        <begin position="1"/>
        <end position="297"/>
    </location>
</feature>
<feature type="topological domain" description="Extracellular" evidence="2">
    <location>
        <begin position="1"/>
        <end position="138"/>
    </location>
</feature>
<feature type="transmembrane region" description="Helical; Signal-anchor for type III membrane protein" evidence="2">
    <location>
        <begin position="139"/>
        <end position="159"/>
    </location>
</feature>
<feature type="topological domain" description="Cytoplasmic" evidence="2">
    <location>
        <begin position="160"/>
        <end position="297"/>
    </location>
</feature>
<feature type="repeat" description="TNFR-Cys 1">
    <location>
        <begin position="2"/>
        <end position="41"/>
    </location>
</feature>
<feature type="repeat" description="TNFR-Cys 2">
    <location>
        <begin position="43"/>
        <end position="83"/>
    </location>
</feature>
<feature type="repeat" description="TNFR-Cys 3">
    <location>
        <begin position="85"/>
        <end position="118"/>
    </location>
</feature>
<feature type="glycosylation site" description="N-linked (GlcNAc...) asparagine" evidence="2">
    <location>
        <position position="74"/>
    </location>
</feature>
<feature type="glycosylation site" description="N-linked (GlcNAc...) asparagine" evidence="2">
    <location>
        <position position="77"/>
    </location>
</feature>
<feature type="disulfide bond" evidence="3">
    <location>
        <begin position="3"/>
        <end position="15"/>
    </location>
</feature>
<feature type="disulfide bond" evidence="3">
    <location>
        <begin position="18"/>
        <end position="31"/>
    </location>
</feature>
<feature type="disulfide bond" evidence="3">
    <location>
        <begin position="21"/>
        <end position="41"/>
    </location>
</feature>
<feature type="disulfide bond" evidence="3">
    <location>
        <begin position="44"/>
        <end position="58"/>
    </location>
</feature>
<feature type="disulfide bond" evidence="3">
    <location>
        <begin position="61"/>
        <end position="75"/>
    </location>
</feature>
<feature type="disulfide bond" evidence="3">
    <location>
        <begin position="64"/>
        <end position="83"/>
    </location>
</feature>
<feature type="disulfide bond" evidence="3">
    <location>
        <begin position="86"/>
        <end position="104"/>
    </location>
</feature>
<feature type="disulfide bond" evidence="3">
    <location>
        <begin position="107"/>
        <end position="118"/>
    </location>
</feature>
<feature type="sequence conflict" description="In Ref. 1; BAC28879." evidence="4" ref="1">
    <original>V</original>
    <variation>A</variation>
    <location>
        <position position="70"/>
    </location>
</feature>
<evidence type="ECO:0000250" key="1"/>
<evidence type="ECO:0000255" key="2"/>
<evidence type="ECO:0000255" key="3">
    <source>
        <dbReference type="PROSITE-ProRule" id="PRU00206"/>
    </source>
</evidence>
<evidence type="ECO:0000305" key="4"/>
<comment type="function">
    <text evidence="1">Receptor for EDA isoform A2, but not for EDA isoform A1. Mediates the activation of the NF-kappa-B and JNK pathways. Activation seems to be mediated by binding to TRAF3 and TRAF6 (By similarity).</text>
</comment>
<comment type="subunit">
    <text evidence="1">Associates with TRAF1, TRAF3 and TRAF6.</text>
</comment>
<comment type="subcellular location">
    <subcellularLocation>
        <location evidence="1">Membrane</location>
        <topology evidence="1">Single-pass type III membrane protein</topology>
    </subcellularLocation>
</comment>